<dbReference type="EMBL" id="AK051480">
    <property type="protein sequence ID" value="BAC34656.1"/>
    <property type="molecule type" value="mRNA"/>
</dbReference>
<dbReference type="EMBL" id="BC038822">
    <property type="protein sequence ID" value="AAH38822.1"/>
    <property type="molecule type" value="mRNA"/>
</dbReference>
<dbReference type="EMBL" id="BC086317">
    <property type="protein sequence ID" value="AAH86317.1"/>
    <property type="molecule type" value="mRNA"/>
</dbReference>
<dbReference type="CCDS" id="CCDS27781.1"/>
<dbReference type="RefSeq" id="NP_001403063.1">
    <property type="nucleotide sequence ID" value="NM_001416134.1"/>
</dbReference>
<dbReference type="RefSeq" id="NP_001403064.1">
    <property type="nucleotide sequence ID" value="NM_001416135.1"/>
</dbReference>
<dbReference type="RefSeq" id="NP_001403065.1">
    <property type="nucleotide sequence ID" value="NM_001416136.1"/>
</dbReference>
<dbReference type="RefSeq" id="NP_001403066.1">
    <property type="nucleotide sequence ID" value="NM_001416137.1"/>
</dbReference>
<dbReference type="RefSeq" id="NP_001403067.1">
    <property type="nucleotide sequence ID" value="NM_001416138.1"/>
</dbReference>
<dbReference type="RefSeq" id="NP_001403068.1">
    <property type="nucleotide sequence ID" value="NM_001416139.1"/>
</dbReference>
<dbReference type="RefSeq" id="NP_001403069.1">
    <property type="nucleotide sequence ID" value="NM_001416140.1"/>
</dbReference>
<dbReference type="RefSeq" id="NP_001403070.1">
    <property type="nucleotide sequence ID" value="NM_001416141.1"/>
</dbReference>
<dbReference type="RefSeq" id="NP_001403071.1">
    <property type="nucleotide sequence ID" value="NM_001416142.1"/>
</dbReference>
<dbReference type="RefSeq" id="NP_001403072.1">
    <property type="nucleotide sequence ID" value="NM_001416143.1"/>
</dbReference>
<dbReference type="RefSeq" id="NP_758497.1">
    <property type="nucleotide sequence ID" value="NM_172293.5"/>
</dbReference>
<dbReference type="RefSeq" id="XP_006521026.1">
    <property type="nucleotide sequence ID" value="XM_006520963.3"/>
</dbReference>
<dbReference type="RefSeq" id="XP_006521027.1">
    <property type="nucleotide sequence ID" value="XM_006520964.3"/>
</dbReference>
<dbReference type="RefSeq" id="XP_006521028.1">
    <property type="nucleotide sequence ID" value="XM_006520965.3"/>
</dbReference>
<dbReference type="RefSeq" id="XP_006521030.1">
    <property type="nucleotide sequence ID" value="XM_006520967.5"/>
</dbReference>
<dbReference type="RefSeq" id="XP_006521031.1">
    <property type="nucleotide sequence ID" value="XM_006520968.5"/>
</dbReference>
<dbReference type="RefSeq" id="XP_011243926.1">
    <property type="nucleotide sequence ID" value="XM_011245624.2"/>
</dbReference>
<dbReference type="RefSeq" id="XP_011243927.1">
    <property type="nucleotide sequence ID" value="XM_011245625.3"/>
</dbReference>
<dbReference type="RefSeq" id="XP_011243928.1">
    <property type="nucleotide sequence ID" value="XM_011245626.4"/>
</dbReference>
<dbReference type="RefSeq" id="XP_036015297.1">
    <property type="nucleotide sequence ID" value="XM_036159404.1"/>
</dbReference>
<dbReference type="FunCoup" id="Q8BGX1">
    <property type="interactions" value="7"/>
</dbReference>
<dbReference type="STRING" id="10090.ENSMUSP00000055485"/>
<dbReference type="iPTMnet" id="Q8BGX1"/>
<dbReference type="PhosphoSitePlus" id="Q8BGX1"/>
<dbReference type="PaxDb" id="10090-ENSMUSP00000055485"/>
<dbReference type="ProteomicsDB" id="289344"/>
<dbReference type="Antibodypedia" id="49373">
    <property type="antibodies" value="22 antibodies from 11 providers"/>
</dbReference>
<dbReference type="DNASU" id="239647"/>
<dbReference type="Ensembl" id="ENSMUST00000059433.8">
    <property type="protein sequence ID" value="ENSMUSP00000055485.7"/>
    <property type="gene ID" value="ENSMUSG00000044250.9"/>
</dbReference>
<dbReference type="Ensembl" id="ENSMUST00000228521.2">
    <property type="protein sequence ID" value="ENSMUSP00000154814.2"/>
    <property type="gene ID" value="ENSMUSG00000044250.9"/>
</dbReference>
<dbReference type="GeneID" id="239647"/>
<dbReference type="KEGG" id="mmu:239647"/>
<dbReference type="UCSC" id="uc007xkt.2">
    <property type="organism name" value="mouse"/>
</dbReference>
<dbReference type="AGR" id="MGI:2446270"/>
<dbReference type="CTD" id="91523"/>
<dbReference type="MGI" id="MGI:2446270">
    <property type="gene designation" value="Pced1b"/>
</dbReference>
<dbReference type="VEuPathDB" id="HostDB:ENSMUSG00000044250"/>
<dbReference type="eggNOG" id="ENOG502QVBZ">
    <property type="taxonomic scope" value="Eukaryota"/>
</dbReference>
<dbReference type="GeneTree" id="ENSGT00390000002231"/>
<dbReference type="HOGENOM" id="CLU_053865_0_0_1"/>
<dbReference type="InParanoid" id="Q8BGX1"/>
<dbReference type="OMA" id="YFHSDVP"/>
<dbReference type="OrthoDB" id="9975373at2759"/>
<dbReference type="PhylomeDB" id="Q8BGX1"/>
<dbReference type="TreeFam" id="TF328972"/>
<dbReference type="BioGRID-ORCS" id="239647">
    <property type="hits" value="10 hits in 77 CRISPR screens"/>
</dbReference>
<dbReference type="ChiTaRS" id="Pced1b">
    <property type="organism name" value="mouse"/>
</dbReference>
<dbReference type="PRO" id="PR:Q8BGX1"/>
<dbReference type="Proteomes" id="UP000000589">
    <property type="component" value="Chromosome 15"/>
</dbReference>
<dbReference type="RNAct" id="Q8BGX1">
    <property type="molecule type" value="protein"/>
</dbReference>
<dbReference type="Bgee" id="ENSMUSG00000044250">
    <property type="expression patterns" value="Expressed in secondary oocyte and 106 other cell types or tissues"/>
</dbReference>
<dbReference type="ExpressionAtlas" id="Q8BGX1">
    <property type="expression patterns" value="baseline and differential"/>
</dbReference>
<dbReference type="Gene3D" id="3.40.50.1110">
    <property type="entry name" value="SGNH hydrolase"/>
    <property type="match status" value="1"/>
</dbReference>
<dbReference type="InterPro" id="IPR036514">
    <property type="entry name" value="SGNH_hydro_sf"/>
</dbReference>
<dbReference type="PANTHER" id="PTHR14469:SF1">
    <property type="entry name" value="PC-ESTERASE DOMAIN-CONTAINING PROTEIN 1B"/>
    <property type="match status" value="1"/>
</dbReference>
<dbReference type="PANTHER" id="PTHR14469">
    <property type="entry name" value="SARCOMA ANTIGEN NY-SAR-23"/>
    <property type="match status" value="1"/>
</dbReference>
<dbReference type="SUPFAM" id="SSF52266">
    <property type="entry name" value="SGNH hydrolase"/>
    <property type="match status" value="1"/>
</dbReference>
<gene>
    <name type="primary">Pced1b</name>
    <name type="synonym">Fam113b</name>
</gene>
<reference key="1">
    <citation type="journal article" date="2005" name="Science">
        <title>The transcriptional landscape of the mammalian genome.</title>
        <authorList>
            <person name="Carninci P."/>
            <person name="Kasukawa T."/>
            <person name="Katayama S."/>
            <person name="Gough J."/>
            <person name="Frith M.C."/>
            <person name="Maeda N."/>
            <person name="Oyama R."/>
            <person name="Ravasi T."/>
            <person name="Lenhard B."/>
            <person name="Wells C."/>
            <person name="Kodzius R."/>
            <person name="Shimokawa K."/>
            <person name="Bajic V.B."/>
            <person name="Brenner S.E."/>
            <person name="Batalov S."/>
            <person name="Forrest A.R."/>
            <person name="Zavolan M."/>
            <person name="Davis M.J."/>
            <person name="Wilming L.G."/>
            <person name="Aidinis V."/>
            <person name="Allen J.E."/>
            <person name="Ambesi-Impiombato A."/>
            <person name="Apweiler R."/>
            <person name="Aturaliya R.N."/>
            <person name="Bailey T.L."/>
            <person name="Bansal M."/>
            <person name="Baxter L."/>
            <person name="Beisel K.W."/>
            <person name="Bersano T."/>
            <person name="Bono H."/>
            <person name="Chalk A.M."/>
            <person name="Chiu K.P."/>
            <person name="Choudhary V."/>
            <person name="Christoffels A."/>
            <person name="Clutterbuck D.R."/>
            <person name="Crowe M.L."/>
            <person name="Dalla E."/>
            <person name="Dalrymple B.P."/>
            <person name="de Bono B."/>
            <person name="Della Gatta G."/>
            <person name="di Bernardo D."/>
            <person name="Down T."/>
            <person name="Engstrom P."/>
            <person name="Fagiolini M."/>
            <person name="Faulkner G."/>
            <person name="Fletcher C.F."/>
            <person name="Fukushima T."/>
            <person name="Furuno M."/>
            <person name="Futaki S."/>
            <person name="Gariboldi M."/>
            <person name="Georgii-Hemming P."/>
            <person name="Gingeras T.R."/>
            <person name="Gojobori T."/>
            <person name="Green R.E."/>
            <person name="Gustincich S."/>
            <person name="Harbers M."/>
            <person name="Hayashi Y."/>
            <person name="Hensch T.K."/>
            <person name="Hirokawa N."/>
            <person name="Hill D."/>
            <person name="Huminiecki L."/>
            <person name="Iacono M."/>
            <person name="Ikeo K."/>
            <person name="Iwama A."/>
            <person name="Ishikawa T."/>
            <person name="Jakt M."/>
            <person name="Kanapin A."/>
            <person name="Katoh M."/>
            <person name="Kawasawa Y."/>
            <person name="Kelso J."/>
            <person name="Kitamura H."/>
            <person name="Kitano H."/>
            <person name="Kollias G."/>
            <person name="Krishnan S.P."/>
            <person name="Kruger A."/>
            <person name="Kummerfeld S.K."/>
            <person name="Kurochkin I.V."/>
            <person name="Lareau L.F."/>
            <person name="Lazarevic D."/>
            <person name="Lipovich L."/>
            <person name="Liu J."/>
            <person name="Liuni S."/>
            <person name="McWilliam S."/>
            <person name="Madan Babu M."/>
            <person name="Madera M."/>
            <person name="Marchionni L."/>
            <person name="Matsuda H."/>
            <person name="Matsuzawa S."/>
            <person name="Miki H."/>
            <person name="Mignone F."/>
            <person name="Miyake S."/>
            <person name="Morris K."/>
            <person name="Mottagui-Tabar S."/>
            <person name="Mulder N."/>
            <person name="Nakano N."/>
            <person name="Nakauchi H."/>
            <person name="Ng P."/>
            <person name="Nilsson R."/>
            <person name="Nishiguchi S."/>
            <person name="Nishikawa S."/>
            <person name="Nori F."/>
            <person name="Ohara O."/>
            <person name="Okazaki Y."/>
            <person name="Orlando V."/>
            <person name="Pang K.C."/>
            <person name="Pavan W.J."/>
            <person name="Pavesi G."/>
            <person name="Pesole G."/>
            <person name="Petrovsky N."/>
            <person name="Piazza S."/>
            <person name="Reed J."/>
            <person name="Reid J.F."/>
            <person name="Ring B.Z."/>
            <person name="Ringwald M."/>
            <person name="Rost B."/>
            <person name="Ruan Y."/>
            <person name="Salzberg S.L."/>
            <person name="Sandelin A."/>
            <person name="Schneider C."/>
            <person name="Schoenbach C."/>
            <person name="Sekiguchi K."/>
            <person name="Semple C.A."/>
            <person name="Seno S."/>
            <person name="Sessa L."/>
            <person name="Sheng Y."/>
            <person name="Shibata Y."/>
            <person name="Shimada H."/>
            <person name="Shimada K."/>
            <person name="Silva D."/>
            <person name="Sinclair B."/>
            <person name="Sperling S."/>
            <person name="Stupka E."/>
            <person name="Sugiura K."/>
            <person name="Sultana R."/>
            <person name="Takenaka Y."/>
            <person name="Taki K."/>
            <person name="Tammoja K."/>
            <person name="Tan S.L."/>
            <person name="Tang S."/>
            <person name="Taylor M.S."/>
            <person name="Tegner J."/>
            <person name="Teichmann S.A."/>
            <person name="Ueda H.R."/>
            <person name="van Nimwegen E."/>
            <person name="Verardo R."/>
            <person name="Wei C.L."/>
            <person name="Yagi K."/>
            <person name="Yamanishi H."/>
            <person name="Zabarovsky E."/>
            <person name="Zhu S."/>
            <person name="Zimmer A."/>
            <person name="Hide W."/>
            <person name="Bult C."/>
            <person name="Grimmond S.M."/>
            <person name="Teasdale R.D."/>
            <person name="Liu E.T."/>
            <person name="Brusic V."/>
            <person name="Quackenbush J."/>
            <person name="Wahlestedt C."/>
            <person name="Mattick J.S."/>
            <person name="Hume D.A."/>
            <person name="Kai C."/>
            <person name="Sasaki D."/>
            <person name="Tomaru Y."/>
            <person name="Fukuda S."/>
            <person name="Kanamori-Katayama M."/>
            <person name="Suzuki M."/>
            <person name="Aoki J."/>
            <person name="Arakawa T."/>
            <person name="Iida J."/>
            <person name="Imamura K."/>
            <person name="Itoh M."/>
            <person name="Kato T."/>
            <person name="Kawaji H."/>
            <person name="Kawagashira N."/>
            <person name="Kawashima T."/>
            <person name="Kojima M."/>
            <person name="Kondo S."/>
            <person name="Konno H."/>
            <person name="Nakano K."/>
            <person name="Ninomiya N."/>
            <person name="Nishio T."/>
            <person name="Okada M."/>
            <person name="Plessy C."/>
            <person name="Shibata K."/>
            <person name="Shiraki T."/>
            <person name="Suzuki S."/>
            <person name="Tagami M."/>
            <person name="Waki K."/>
            <person name="Watahiki A."/>
            <person name="Okamura-Oho Y."/>
            <person name="Suzuki H."/>
            <person name="Kawai J."/>
            <person name="Hayashizaki Y."/>
        </authorList>
    </citation>
    <scope>NUCLEOTIDE SEQUENCE [LARGE SCALE MRNA]</scope>
    <source>
        <strain>C57BL/6J</strain>
        <tissue>Spinal ganglion</tissue>
    </source>
</reference>
<reference key="2">
    <citation type="journal article" date="2004" name="Genome Res.">
        <title>The status, quality, and expansion of the NIH full-length cDNA project: the Mammalian Gene Collection (MGC).</title>
        <authorList>
            <consortium name="The MGC Project Team"/>
        </authorList>
    </citation>
    <scope>NUCLEOTIDE SEQUENCE [LARGE SCALE MRNA]</scope>
    <source>
        <strain>C57BL/6J</strain>
        <strain>FVB/N</strain>
        <tissue>Embryo</tissue>
        <tissue>Salivary gland</tissue>
    </source>
</reference>
<accession>Q8BGX1</accession>
<accession>Q5RK34</accession>
<proteinExistence type="evidence at transcript level"/>
<name>PED1B_MOUSE</name>
<organism>
    <name type="scientific">Mus musculus</name>
    <name type="common">Mouse</name>
    <dbReference type="NCBI Taxonomy" id="10090"/>
    <lineage>
        <taxon>Eukaryota</taxon>
        <taxon>Metazoa</taxon>
        <taxon>Chordata</taxon>
        <taxon>Craniata</taxon>
        <taxon>Vertebrata</taxon>
        <taxon>Euteleostomi</taxon>
        <taxon>Mammalia</taxon>
        <taxon>Eutheria</taxon>
        <taxon>Euarchontoglires</taxon>
        <taxon>Glires</taxon>
        <taxon>Rodentia</taxon>
        <taxon>Myomorpha</taxon>
        <taxon>Muroidea</taxon>
        <taxon>Muridae</taxon>
        <taxon>Murinae</taxon>
        <taxon>Mus</taxon>
        <taxon>Mus</taxon>
    </lineage>
</organism>
<evidence type="ECO:0000256" key="1">
    <source>
        <dbReference type="SAM" id="MobiDB-lite"/>
    </source>
</evidence>
<evidence type="ECO:0000305" key="2"/>
<feature type="chain" id="PRO_0000331357" description="PC-esterase domain-containing protein 1B">
    <location>
        <begin position="1"/>
        <end position="433"/>
    </location>
</feature>
<feature type="region of interest" description="Disordered" evidence="1">
    <location>
        <begin position="386"/>
        <end position="433"/>
    </location>
</feature>
<feature type="sequence conflict" description="In Ref. 2; AAH86317." evidence="2" ref="2">
    <original>F</original>
    <variation>S</variation>
    <location>
        <position position="220"/>
    </location>
</feature>
<feature type="sequence conflict" description="In Ref. 2; AAH86317." evidence="2" ref="2">
    <original>S</original>
    <variation>G</variation>
    <location>
        <position position="275"/>
    </location>
</feature>
<sequence>MVRLLASEVQQLLHNKFVVVLGDSVHRAVYKDLVLLLQKDCLLTNKQLRTKGELSFEKDQLKMGGELDTLHNRTDYREVREFCSDHHLVRFYFLTRVYSEYMESVLEELQSGNHAPDVIIMNSCLWDVSRYGRNSLSSYKQNLENLFGRMDQVLPKSCLLVWNTAMPLGDKIKAAFLPQKCKGQYPRISVATLKRKVTQANLYSHAEATKHYFDVLDLNFHFRQARKHLQGDGVHWNEHAHRKLSYLLLAHMADAWGVELPQRDSWEPDFEAWESSGQVEERQPQDNLGPQVFAPSPHCPFRPPPLLPSPGLPIRPPPLLGCPLPQPQQMPPFPLYPQVSYFSSDPVFQSDEFYIHSDSPPPTHTGYAFEGDFSFYPQPPVPNFRPPCHQRQAPVVHRGFPRHFARGPYSNPWRDRPRRPPKHSPAGLESRPQ</sequence>
<keyword id="KW-1185">Reference proteome</keyword>
<comment type="similarity">
    <text evidence="2">Belongs to the PC-esterase family.</text>
</comment>
<protein>
    <recommendedName>
        <fullName>PC-esterase domain-containing protein 1B</fullName>
    </recommendedName>
    <alternativeName>
        <fullName>Protein FAM113B</fullName>
    </alternativeName>
</protein>